<feature type="chain" id="PRO_0000093640" description="Weak neurotoxin 8" evidence="3">
    <location>
        <begin position="1"/>
        <end position="65"/>
    </location>
</feature>
<feature type="disulfide bond" evidence="2">
    <location>
        <begin position="3"/>
        <end position="24"/>
    </location>
</feature>
<feature type="disulfide bond" evidence="2">
    <location>
        <begin position="6"/>
        <end position="11"/>
    </location>
</feature>
<feature type="disulfide bond" evidence="2">
    <location>
        <begin position="17"/>
        <end position="42"/>
    </location>
</feature>
<feature type="disulfide bond" evidence="2">
    <location>
        <begin position="46"/>
        <end position="57"/>
    </location>
</feature>
<feature type="disulfide bond" evidence="2">
    <location>
        <begin position="58"/>
        <end position="63"/>
    </location>
</feature>
<proteinExistence type="evidence at protein level"/>
<dbReference type="PIR" id="S16021">
    <property type="entry name" value="S16021"/>
</dbReference>
<dbReference type="SMR" id="P29182"/>
<dbReference type="Proteomes" id="UP000694559">
    <property type="component" value="Unplaced"/>
</dbReference>
<dbReference type="GO" id="GO:0005576">
    <property type="term" value="C:extracellular region"/>
    <property type="evidence" value="ECO:0007669"/>
    <property type="project" value="UniProtKB-SubCell"/>
</dbReference>
<dbReference type="GO" id="GO:0090729">
    <property type="term" value="F:toxin activity"/>
    <property type="evidence" value="ECO:0007669"/>
    <property type="project" value="UniProtKB-KW"/>
</dbReference>
<dbReference type="CDD" id="cd00206">
    <property type="entry name" value="TFP_snake_toxin"/>
    <property type="match status" value="1"/>
</dbReference>
<dbReference type="FunFam" id="2.10.60.10:FF:000024">
    <property type="entry name" value="Cytotoxin 1"/>
    <property type="match status" value="1"/>
</dbReference>
<dbReference type="Gene3D" id="2.10.60.10">
    <property type="entry name" value="CD59"/>
    <property type="match status" value="1"/>
</dbReference>
<dbReference type="InterPro" id="IPR003571">
    <property type="entry name" value="Snake_3FTx"/>
</dbReference>
<dbReference type="InterPro" id="IPR045860">
    <property type="entry name" value="Snake_toxin-like_sf"/>
</dbReference>
<dbReference type="InterPro" id="IPR018354">
    <property type="entry name" value="Snake_toxin_con_site"/>
</dbReference>
<dbReference type="InterPro" id="IPR054131">
    <property type="entry name" value="Toxin_cobra-type"/>
</dbReference>
<dbReference type="Pfam" id="PF21947">
    <property type="entry name" value="Toxin_cobra-type"/>
    <property type="match status" value="1"/>
</dbReference>
<dbReference type="SUPFAM" id="SSF57302">
    <property type="entry name" value="Snake toxin-like"/>
    <property type="match status" value="1"/>
</dbReference>
<dbReference type="PROSITE" id="PS00272">
    <property type="entry name" value="SNAKE_TOXIN"/>
    <property type="match status" value="1"/>
</dbReference>
<name>3NO28_NAJNA</name>
<organism>
    <name type="scientific">Naja naja</name>
    <name type="common">Indian cobra</name>
    <dbReference type="NCBI Taxonomy" id="35670"/>
    <lineage>
        <taxon>Eukaryota</taxon>
        <taxon>Metazoa</taxon>
        <taxon>Chordata</taxon>
        <taxon>Craniata</taxon>
        <taxon>Vertebrata</taxon>
        <taxon>Euteleostomi</taxon>
        <taxon>Lepidosauria</taxon>
        <taxon>Squamata</taxon>
        <taxon>Bifurcata</taxon>
        <taxon>Unidentata</taxon>
        <taxon>Episquamata</taxon>
        <taxon>Toxicofera</taxon>
        <taxon>Serpentes</taxon>
        <taxon>Colubroidea</taxon>
        <taxon>Elapidae</taxon>
        <taxon>Elapinae</taxon>
        <taxon>Naja</taxon>
    </lineage>
</organism>
<evidence type="ECO:0000250" key="1">
    <source>
        <dbReference type="UniProtKB" id="O42255"/>
    </source>
</evidence>
<evidence type="ECO:0000250" key="2">
    <source>
        <dbReference type="UniProtKB" id="Q8AY51"/>
    </source>
</evidence>
<evidence type="ECO:0000269" key="3">
    <source>
    </source>
</evidence>
<evidence type="ECO:0000305" key="4"/>
<evidence type="ECO:0000305" key="5">
    <source>
    </source>
</evidence>
<keyword id="KW-0903">Direct protein sequencing</keyword>
<keyword id="KW-1015">Disulfide bond</keyword>
<keyword id="KW-1185">Reference proteome</keyword>
<keyword id="KW-0964">Secreted</keyword>
<keyword id="KW-0800">Toxin</keyword>
<reference key="1">
    <citation type="journal article" date="1991" name="FEBS Lett.">
        <title>Extensive multiplicity of the miscellaneous type of neurotoxins from the venom of the cobra Naja naja naja and structural characterization of major components.</title>
        <authorList>
            <person name="Shafqat J."/>
            <person name="Siddiqi A.R."/>
            <person name="Zaidi Z.H."/>
            <person name="Joernvall H."/>
        </authorList>
    </citation>
    <scope>PROTEIN SEQUENCE</scope>
    <scope>SUBCELLULAR LOCATION</scope>
    <source>
        <tissue>Venom</tissue>
    </source>
</reference>
<accession>P29182</accession>
<sequence>LTCLNCPEVYCRRFQKCRNGEKICFKKFDQRNLLGKRYEIGCAATCPEAKPREIVQCCSTDKCNR</sequence>
<comment type="function">
    <text evidence="1">Binds with low affinity to muscular (alpha-1-beta-1-delta-epsilon/CHRNA1-CHRNB1-CHRND-CHRNE) and very low affinity to neuronal (alpha-7/CHRNA7) nicotinic acetylcholine receptor (nAChR).</text>
</comment>
<comment type="subcellular location">
    <subcellularLocation>
        <location evidence="3">Secreted</location>
    </subcellularLocation>
</comment>
<comment type="tissue specificity">
    <text evidence="5">Expressed by the venom gland.</text>
</comment>
<comment type="similarity">
    <text evidence="4">Belongs to the three-finger toxin family. Ancestral subfamily. Orphan group II sub-subfamily.</text>
</comment>
<protein>
    <recommendedName>
        <fullName evidence="5">Weak neurotoxin 8</fullName>
    </recommendedName>
</protein>